<accession>P66774</accession>
<accession>A0A1R3XUU5</accession>
<accession>O53614</accession>
<accession>X2BDX6</accession>
<name>SDHL_MYCBO</name>
<proteinExistence type="inferred from homology"/>
<gene>
    <name type="primary">sdaA</name>
    <name type="ordered locus">BQ2027_MB0070C</name>
</gene>
<keyword id="KW-0004">4Fe-4S</keyword>
<keyword id="KW-0312">Gluconeogenesis</keyword>
<keyword id="KW-0408">Iron</keyword>
<keyword id="KW-0411">Iron-sulfur</keyword>
<keyword id="KW-0456">Lyase</keyword>
<keyword id="KW-0479">Metal-binding</keyword>
<keyword id="KW-1185">Reference proteome</keyword>
<feature type="chain" id="PRO_0000171910" description="L-serine dehydratase">
    <location>
        <begin position="1"/>
        <end position="461"/>
    </location>
</feature>
<comment type="catalytic activity">
    <reaction>
        <text>L-serine = pyruvate + NH4(+)</text>
        <dbReference type="Rhea" id="RHEA:19169"/>
        <dbReference type="ChEBI" id="CHEBI:15361"/>
        <dbReference type="ChEBI" id="CHEBI:28938"/>
        <dbReference type="ChEBI" id="CHEBI:33384"/>
        <dbReference type="EC" id="4.3.1.17"/>
    </reaction>
</comment>
<comment type="cofactor">
    <cofactor evidence="1">
        <name>[4Fe-4S] cluster</name>
        <dbReference type="ChEBI" id="CHEBI:49883"/>
    </cofactor>
    <text evidence="1">Binds 1 [4Fe-4S] cluster.</text>
</comment>
<comment type="pathway">
    <text>Carbohydrate biosynthesis; gluconeogenesis.</text>
</comment>
<comment type="similarity">
    <text evidence="1">Belongs to the iron-sulfur dependent L-serine dehydratase family.</text>
</comment>
<dbReference type="EC" id="4.3.1.17"/>
<dbReference type="EMBL" id="LT708304">
    <property type="protein sequence ID" value="SIT98448.1"/>
    <property type="molecule type" value="Genomic_DNA"/>
</dbReference>
<dbReference type="RefSeq" id="NP_853739.1">
    <property type="nucleotide sequence ID" value="NC_002945.3"/>
</dbReference>
<dbReference type="RefSeq" id="WP_003400600.1">
    <property type="nucleotide sequence ID" value="NC_002945.4"/>
</dbReference>
<dbReference type="SMR" id="P66774"/>
<dbReference type="KEGG" id="mbo:BQ2027_MB0070C"/>
<dbReference type="PATRIC" id="fig|233413.5.peg.79"/>
<dbReference type="UniPathway" id="UPA00138"/>
<dbReference type="Proteomes" id="UP000001419">
    <property type="component" value="Chromosome"/>
</dbReference>
<dbReference type="GO" id="GO:0051539">
    <property type="term" value="F:4 iron, 4 sulfur cluster binding"/>
    <property type="evidence" value="ECO:0007669"/>
    <property type="project" value="UniProtKB-KW"/>
</dbReference>
<dbReference type="GO" id="GO:0003941">
    <property type="term" value="F:L-serine ammonia-lyase activity"/>
    <property type="evidence" value="ECO:0007669"/>
    <property type="project" value="UniProtKB-EC"/>
</dbReference>
<dbReference type="GO" id="GO:0046872">
    <property type="term" value="F:metal ion binding"/>
    <property type="evidence" value="ECO:0007669"/>
    <property type="project" value="UniProtKB-KW"/>
</dbReference>
<dbReference type="GO" id="GO:0006094">
    <property type="term" value="P:gluconeogenesis"/>
    <property type="evidence" value="ECO:0007669"/>
    <property type="project" value="UniProtKB-UniPathway"/>
</dbReference>
<dbReference type="FunFam" id="3.30.1330.90:FF:000001">
    <property type="entry name" value="L-serine ammonia-lyase 1"/>
    <property type="match status" value="1"/>
</dbReference>
<dbReference type="Gene3D" id="3.30.1330.90">
    <property type="entry name" value="D-3-phosphoglycerate dehydrogenase, domain 3"/>
    <property type="match status" value="1"/>
</dbReference>
<dbReference type="InterPro" id="IPR029009">
    <property type="entry name" value="ASB_dom_sf"/>
</dbReference>
<dbReference type="InterPro" id="IPR051318">
    <property type="entry name" value="Fe-S_L-Ser"/>
</dbReference>
<dbReference type="InterPro" id="IPR004644">
    <property type="entry name" value="Fe-S_L-Ser_mono"/>
</dbReference>
<dbReference type="InterPro" id="IPR005130">
    <property type="entry name" value="Ser_deHydtase-like_asu"/>
</dbReference>
<dbReference type="InterPro" id="IPR005131">
    <property type="entry name" value="Ser_deHydtase_bsu"/>
</dbReference>
<dbReference type="NCBIfam" id="TIGR00720">
    <property type="entry name" value="sda_mono"/>
    <property type="match status" value="1"/>
</dbReference>
<dbReference type="PANTHER" id="PTHR30182">
    <property type="entry name" value="L-SERINE DEHYDRATASE"/>
    <property type="match status" value="1"/>
</dbReference>
<dbReference type="PANTHER" id="PTHR30182:SF1">
    <property type="entry name" value="L-SERINE DEHYDRATASE 1"/>
    <property type="match status" value="1"/>
</dbReference>
<dbReference type="Pfam" id="PF03313">
    <property type="entry name" value="SDH_alpha"/>
    <property type="match status" value="1"/>
</dbReference>
<dbReference type="Pfam" id="PF03315">
    <property type="entry name" value="SDH_beta"/>
    <property type="match status" value="1"/>
</dbReference>
<dbReference type="SUPFAM" id="SSF143548">
    <property type="entry name" value="Serine metabolism enzymes domain"/>
    <property type="match status" value="1"/>
</dbReference>
<sequence length="461" mass="48576">MTISVFDLFTIGIGPSSSHTVGPMRAANQFVVALRRRGHLDDLEAMRVDLFGSLAATGAGHGTMSAILLGLEGCQPETITTEHKERRLAEIAASGVTRIGGVIPVPLTERDIDLHPDIVLPTHPNGMTFTAAGPHGRVLATETYFSVGGGFIVTEQTSGNSGQHPCSVALPYVSAQELLDICDRLDVSISEAALRNETCCRTENEVRAALLHLRDVMVECEQRSIAREGLLPGGLRVRRRAKVWYDRLNAEDPTRKPEFAEDWVNLVALAVNEENASGGRVVTAPTNGAAGIVPAVLHYAIHYTSAGAGDPDDVTVRFLLTAGAIGSLFKERASISGAEVGCQGEVGSAAAMAAAGLAEILGGTPRQVENAAEIAMEHSLGLTCDPIAGLVQIPCIERNAISAGKAINAARMALRGDGIHRVTLDQVIDTMRATGADMHTKYKETSAGGLAINVAVNIVEC</sequence>
<evidence type="ECO:0000305" key="1"/>
<organism>
    <name type="scientific">Mycobacterium bovis (strain ATCC BAA-935 / AF2122/97)</name>
    <dbReference type="NCBI Taxonomy" id="233413"/>
    <lineage>
        <taxon>Bacteria</taxon>
        <taxon>Bacillati</taxon>
        <taxon>Actinomycetota</taxon>
        <taxon>Actinomycetes</taxon>
        <taxon>Mycobacteriales</taxon>
        <taxon>Mycobacteriaceae</taxon>
        <taxon>Mycobacterium</taxon>
        <taxon>Mycobacterium tuberculosis complex</taxon>
    </lineage>
</organism>
<reference key="1">
    <citation type="journal article" date="2003" name="Proc. Natl. Acad. Sci. U.S.A.">
        <title>The complete genome sequence of Mycobacterium bovis.</title>
        <authorList>
            <person name="Garnier T."/>
            <person name="Eiglmeier K."/>
            <person name="Camus J.-C."/>
            <person name="Medina N."/>
            <person name="Mansoor H."/>
            <person name="Pryor M."/>
            <person name="Duthoy S."/>
            <person name="Grondin S."/>
            <person name="Lacroix C."/>
            <person name="Monsempe C."/>
            <person name="Simon S."/>
            <person name="Harris B."/>
            <person name="Atkin R."/>
            <person name="Doggett J."/>
            <person name="Mayes R."/>
            <person name="Keating L."/>
            <person name="Wheeler P.R."/>
            <person name="Parkhill J."/>
            <person name="Barrell B.G."/>
            <person name="Cole S.T."/>
            <person name="Gordon S.V."/>
            <person name="Hewinson R.G."/>
        </authorList>
    </citation>
    <scope>NUCLEOTIDE SEQUENCE [LARGE SCALE GENOMIC DNA]</scope>
    <source>
        <strain>ATCC BAA-935 / AF2122/97</strain>
    </source>
</reference>
<reference key="2">
    <citation type="journal article" date="2017" name="Genome Announc.">
        <title>Updated reference genome sequence and annotation of Mycobacterium bovis AF2122/97.</title>
        <authorList>
            <person name="Malone K.M."/>
            <person name="Farrell D."/>
            <person name="Stuber T.P."/>
            <person name="Schubert O.T."/>
            <person name="Aebersold R."/>
            <person name="Robbe-Austerman S."/>
            <person name="Gordon S.V."/>
        </authorList>
    </citation>
    <scope>NUCLEOTIDE SEQUENCE [LARGE SCALE GENOMIC DNA]</scope>
    <scope>GENOME REANNOTATION</scope>
    <source>
        <strain>ATCC BAA-935 / AF2122/97</strain>
    </source>
</reference>
<protein>
    <recommendedName>
        <fullName>L-serine dehydratase</fullName>
        <shortName>SDH</shortName>
        <ecNumber>4.3.1.17</ecNumber>
    </recommendedName>
    <alternativeName>
        <fullName>L-serine deaminase</fullName>
        <shortName>L-SD</shortName>
    </alternativeName>
</protein>